<keyword id="KW-0963">Cytoplasm</keyword>
<keyword id="KW-0227">DNA damage</keyword>
<keyword id="KW-0233">DNA recombination</keyword>
<keyword id="KW-0234">DNA repair</keyword>
<keyword id="KW-0238">DNA-binding</keyword>
<keyword id="KW-0255">Endonuclease</keyword>
<keyword id="KW-0378">Hydrolase</keyword>
<keyword id="KW-0460">Magnesium</keyword>
<keyword id="KW-0479">Metal-binding</keyword>
<keyword id="KW-0540">Nuclease</keyword>
<organism>
    <name type="scientific">Bifidobacterium longum subsp. infantis (strain ATCC 15697 / DSM 20088 / JCM 1222 / NCTC 11817 / S12)</name>
    <dbReference type="NCBI Taxonomy" id="391904"/>
    <lineage>
        <taxon>Bacteria</taxon>
        <taxon>Bacillati</taxon>
        <taxon>Actinomycetota</taxon>
        <taxon>Actinomycetes</taxon>
        <taxon>Bifidobacteriales</taxon>
        <taxon>Bifidobacteriaceae</taxon>
        <taxon>Bifidobacterium</taxon>
    </lineage>
</organism>
<accession>B7GR16</accession>
<accession>E8MJP4</accession>
<evidence type="ECO:0000255" key="1">
    <source>
        <dbReference type="HAMAP-Rule" id="MF_00034"/>
    </source>
</evidence>
<evidence type="ECO:0000256" key="2">
    <source>
        <dbReference type="SAM" id="MobiDB-lite"/>
    </source>
</evidence>
<reference key="1">
    <citation type="journal article" date="2008" name="Proc. Natl. Acad. Sci. U.S.A.">
        <title>The genome sequence of Bifidobacterium longum subsp. infantis reveals adaptations for milk utilization within the infant microbiome.</title>
        <authorList>
            <person name="Sela D.A."/>
            <person name="Chapman J."/>
            <person name="Adeuya A."/>
            <person name="Kim J.H."/>
            <person name="Chen F."/>
            <person name="Whitehead T.R."/>
            <person name="Lapidus A."/>
            <person name="Rokhsar D.S."/>
            <person name="Lebrilla C.B."/>
            <person name="German J.B."/>
            <person name="Price N.P."/>
            <person name="Richardson P.M."/>
            <person name="Mills D.A."/>
        </authorList>
    </citation>
    <scope>NUCLEOTIDE SEQUENCE [LARGE SCALE GENOMIC DNA]</scope>
    <source>
        <strain>ATCC 15697 / DSM 20088 / JCM 1222 / NCTC 11817 / S12</strain>
    </source>
</reference>
<reference key="2">
    <citation type="journal article" date="2011" name="Nature">
        <title>Bifidobacteria can protect from enteropathogenic infection through production of acetate.</title>
        <authorList>
            <person name="Fukuda S."/>
            <person name="Toh H."/>
            <person name="Hase K."/>
            <person name="Oshima K."/>
            <person name="Nakanishi Y."/>
            <person name="Yoshimura K."/>
            <person name="Tobe T."/>
            <person name="Clarke J.M."/>
            <person name="Topping D.L."/>
            <person name="Suzuki T."/>
            <person name="Taylor T.D."/>
            <person name="Itoh K."/>
            <person name="Kikuchi J."/>
            <person name="Morita H."/>
            <person name="Hattori M."/>
            <person name="Ohno H."/>
        </authorList>
    </citation>
    <scope>NUCLEOTIDE SEQUENCE [LARGE SCALE GENOMIC DNA]</scope>
    <source>
        <strain>ATCC 15697 / DSM 20088 / JCM 1222 / NCTC 11817 / S12</strain>
    </source>
</reference>
<proteinExistence type="inferred from homology"/>
<comment type="function">
    <text evidence="1">The RuvA-RuvB-RuvC complex processes Holliday junction (HJ) DNA during genetic recombination and DNA repair. Endonuclease that resolves HJ intermediates. Cleaves cruciform DNA by making single-stranded nicks across the HJ at symmetrical positions within the homologous arms, yielding a 5'-phosphate and a 3'-hydroxyl group; requires a central core of homology in the junction. The consensus cleavage sequence is 5'-(A/T)TT(C/G)-3'. Cleavage occurs on the 3'-side of the TT dinucleotide at the point of strand exchange. HJ branch migration catalyzed by RuvA-RuvB allows RuvC to scan DNA until it finds its consensus sequence, where it cleaves and resolves the cruciform DNA.</text>
</comment>
<comment type="catalytic activity">
    <reaction evidence="1">
        <text>Endonucleolytic cleavage at a junction such as a reciprocal single-stranded crossover between two homologous DNA duplexes (Holliday junction).</text>
        <dbReference type="EC" id="3.1.21.10"/>
    </reaction>
</comment>
<comment type="cofactor">
    <cofactor evidence="1">
        <name>Mg(2+)</name>
        <dbReference type="ChEBI" id="CHEBI:18420"/>
    </cofactor>
    <text evidence="1">Binds 2 Mg(2+) ion per subunit.</text>
</comment>
<comment type="subunit">
    <text evidence="1">Homodimer which binds Holliday junction (HJ) DNA. The HJ becomes 2-fold symmetrical on binding to RuvC with unstacked arms; it has a different conformation from HJ DNA in complex with RuvA. In the full resolvosome a probable DNA-RuvA(4)-RuvB(12)-RuvC(2) complex forms which resolves the HJ.</text>
</comment>
<comment type="subcellular location">
    <subcellularLocation>
        <location evidence="1">Cytoplasm</location>
    </subcellularLocation>
</comment>
<comment type="similarity">
    <text evidence="1">Belongs to the RuvC family.</text>
</comment>
<name>RUVC_BIFLS</name>
<feature type="chain" id="PRO_1000195237" description="Crossover junction endodeoxyribonuclease RuvC">
    <location>
        <begin position="1"/>
        <end position="194"/>
    </location>
</feature>
<feature type="region of interest" description="Disordered" evidence="2">
    <location>
        <begin position="162"/>
        <end position="194"/>
    </location>
</feature>
<feature type="compositionally biased region" description="Basic residues" evidence="2">
    <location>
        <begin position="184"/>
        <end position="194"/>
    </location>
</feature>
<feature type="active site" evidence="1">
    <location>
        <position position="7"/>
    </location>
</feature>
<feature type="active site" evidence="1">
    <location>
        <position position="68"/>
    </location>
</feature>
<feature type="active site" evidence="1">
    <location>
        <position position="141"/>
    </location>
</feature>
<feature type="binding site" evidence="1">
    <location>
        <position position="7"/>
    </location>
    <ligand>
        <name>Mg(2+)</name>
        <dbReference type="ChEBI" id="CHEBI:18420"/>
        <label>1</label>
    </ligand>
</feature>
<feature type="binding site" evidence="1">
    <location>
        <position position="68"/>
    </location>
    <ligand>
        <name>Mg(2+)</name>
        <dbReference type="ChEBI" id="CHEBI:18420"/>
        <label>2</label>
    </ligand>
</feature>
<feature type="binding site" evidence="1">
    <location>
        <position position="141"/>
    </location>
    <ligand>
        <name>Mg(2+)</name>
        <dbReference type="ChEBI" id="CHEBI:18420"/>
        <label>1</label>
    </ligand>
</feature>
<sequence length="194" mass="20819">MIILGVDPGLTRCGVGVIEAGEHRRLSFIHVDVVRSSPDITQDLRLLAIYNGLSEKMDRFAPDAVSIERVFAQSNRNTVLGTAQAAGLAMLAAAQRGIPVALHTPTEAKLAITGNGQAQKVQVERMVTRVLNLTKMPTPADAADALALAICHALRPAGALQGGEREQHLTAAQRQWAEAAQNSTRRRKNSDRGM</sequence>
<gene>
    <name evidence="1" type="primary">ruvC</name>
    <name type="ordered locus">Blon_1156</name>
    <name type="ordered locus">BLIJ_1183</name>
</gene>
<protein>
    <recommendedName>
        <fullName evidence="1">Crossover junction endodeoxyribonuclease RuvC</fullName>
        <ecNumber evidence="1">3.1.21.10</ecNumber>
    </recommendedName>
    <alternativeName>
        <fullName evidence="1">Holliday junction nuclease RuvC</fullName>
    </alternativeName>
    <alternativeName>
        <fullName evidence="1">Holliday junction resolvase RuvC</fullName>
    </alternativeName>
</protein>
<dbReference type="EC" id="3.1.21.10" evidence="1"/>
<dbReference type="EMBL" id="CP001095">
    <property type="protein sequence ID" value="ACJ52246.1"/>
    <property type="molecule type" value="Genomic_DNA"/>
</dbReference>
<dbReference type="EMBL" id="AP010889">
    <property type="protein sequence ID" value="BAJ68771.1"/>
    <property type="molecule type" value="Genomic_DNA"/>
</dbReference>
<dbReference type="RefSeq" id="WP_012577503.1">
    <property type="nucleotide sequence ID" value="NZ_JDTT01000068.1"/>
</dbReference>
<dbReference type="SMR" id="B7GR16"/>
<dbReference type="KEGG" id="bln:Blon_1156"/>
<dbReference type="KEGG" id="blon:BLIJ_1183"/>
<dbReference type="PATRIC" id="fig|391904.8.peg.1180"/>
<dbReference type="HOGENOM" id="CLU_091257_0_2_11"/>
<dbReference type="Proteomes" id="UP000001360">
    <property type="component" value="Chromosome"/>
</dbReference>
<dbReference type="GO" id="GO:0005737">
    <property type="term" value="C:cytoplasm"/>
    <property type="evidence" value="ECO:0007669"/>
    <property type="project" value="UniProtKB-SubCell"/>
</dbReference>
<dbReference type="GO" id="GO:0048476">
    <property type="term" value="C:Holliday junction resolvase complex"/>
    <property type="evidence" value="ECO:0007669"/>
    <property type="project" value="UniProtKB-UniRule"/>
</dbReference>
<dbReference type="GO" id="GO:0008821">
    <property type="term" value="F:crossover junction DNA endonuclease activity"/>
    <property type="evidence" value="ECO:0007669"/>
    <property type="project" value="UniProtKB-UniRule"/>
</dbReference>
<dbReference type="GO" id="GO:0003677">
    <property type="term" value="F:DNA binding"/>
    <property type="evidence" value="ECO:0007669"/>
    <property type="project" value="UniProtKB-KW"/>
</dbReference>
<dbReference type="GO" id="GO:0000287">
    <property type="term" value="F:magnesium ion binding"/>
    <property type="evidence" value="ECO:0007669"/>
    <property type="project" value="UniProtKB-UniRule"/>
</dbReference>
<dbReference type="GO" id="GO:0006310">
    <property type="term" value="P:DNA recombination"/>
    <property type="evidence" value="ECO:0007669"/>
    <property type="project" value="UniProtKB-UniRule"/>
</dbReference>
<dbReference type="GO" id="GO:0006281">
    <property type="term" value="P:DNA repair"/>
    <property type="evidence" value="ECO:0007669"/>
    <property type="project" value="UniProtKB-UniRule"/>
</dbReference>
<dbReference type="CDD" id="cd16962">
    <property type="entry name" value="RuvC"/>
    <property type="match status" value="1"/>
</dbReference>
<dbReference type="FunFam" id="3.30.420.10:FF:000002">
    <property type="entry name" value="Crossover junction endodeoxyribonuclease RuvC"/>
    <property type="match status" value="1"/>
</dbReference>
<dbReference type="Gene3D" id="3.30.420.10">
    <property type="entry name" value="Ribonuclease H-like superfamily/Ribonuclease H"/>
    <property type="match status" value="1"/>
</dbReference>
<dbReference type="HAMAP" id="MF_00034">
    <property type="entry name" value="RuvC"/>
    <property type="match status" value="1"/>
</dbReference>
<dbReference type="InterPro" id="IPR012337">
    <property type="entry name" value="RNaseH-like_sf"/>
</dbReference>
<dbReference type="InterPro" id="IPR036397">
    <property type="entry name" value="RNaseH_sf"/>
</dbReference>
<dbReference type="InterPro" id="IPR020563">
    <property type="entry name" value="X-over_junc_endoDNase_Mg_BS"/>
</dbReference>
<dbReference type="InterPro" id="IPR002176">
    <property type="entry name" value="X-over_junc_endoDNase_RuvC"/>
</dbReference>
<dbReference type="NCBIfam" id="TIGR00228">
    <property type="entry name" value="ruvC"/>
    <property type="match status" value="1"/>
</dbReference>
<dbReference type="PANTHER" id="PTHR30194">
    <property type="entry name" value="CROSSOVER JUNCTION ENDODEOXYRIBONUCLEASE RUVC"/>
    <property type="match status" value="1"/>
</dbReference>
<dbReference type="PANTHER" id="PTHR30194:SF3">
    <property type="entry name" value="CROSSOVER JUNCTION ENDODEOXYRIBONUCLEASE RUVC"/>
    <property type="match status" value="1"/>
</dbReference>
<dbReference type="Pfam" id="PF02075">
    <property type="entry name" value="RuvC"/>
    <property type="match status" value="1"/>
</dbReference>
<dbReference type="PRINTS" id="PR00696">
    <property type="entry name" value="RSOLVASERUVC"/>
</dbReference>
<dbReference type="SUPFAM" id="SSF53098">
    <property type="entry name" value="Ribonuclease H-like"/>
    <property type="match status" value="1"/>
</dbReference>
<dbReference type="PROSITE" id="PS01321">
    <property type="entry name" value="RUVC"/>
    <property type="match status" value="1"/>
</dbReference>